<organism>
    <name type="scientific">Synechococcus sp. (strain JA-3-3Ab)</name>
    <name type="common">Cyanobacteria bacterium Yellowstone A-Prime</name>
    <dbReference type="NCBI Taxonomy" id="321327"/>
    <lineage>
        <taxon>Bacteria</taxon>
        <taxon>Bacillati</taxon>
        <taxon>Cyanobacteriota</taxon>
        <taxon>Cyanophyceae</taxon>
        <taxon>Synechococcales</taxon>
        <taxon>Synechococcaceae</taxon>
        <taxon>Synechococcus</taxon>
    </lineage>
</organism>
<name>MEND_SYNJA</name>
<dbReference type="EC" id="2.2.1.9" evidence="1"/>
<dbReference type="EMBL" id="CP000239">
    <property type="protein sequence ID" value="ABC98311.1"/>
    <property type="molecule type" value="Genomic_DNA"/>
</dbReference>
<dbReference type="RefSeq" id="WP_011429003.1">
    <property type="nucleotide sequence ID" value="NC_007775.1"/>
</dbReference>
<dbReference type="SMR" id="Q2JY06"/>
<dbReference type="STRING" id="321327.CYA_0082"/>
<dbReference type="KEGG" id="cya:CYA_0082"/>
<dbReference type="eggNOG" id="COG1165">
    <property type="taxonomic scope" value="Bacteria"/>
</dbReference>
<dbReference type="HOGENOM" id="CLU_006051_3_0_3"/>
<dbReference type="OrthoDB" id="9791859at2"/>
<dbReference type="UniPathway" id="UPA00995"/>
<dbReference type="UniPathway" id="UPA01057">
    <property type="reaction ID" value="UER00164"/>
</dbReference>
<dbReference type="Proteomes" id="UP000008818">
    <property type="component" value="Chromosome"/>
</dbReference>
<dbReference type="GO" id="GO:0070204">
    <property type="term" value="F:2-succinyl-5-enolpyruvyl-6-hydroxy-3-cyclohexene-1-carboxylic-acid synthase activity"/>
    <property type="evidence" value="ECO:0007669"/>
    <property type="project" value="UniProtKB-UniRule"/>
</dbReference>
<dbReference type="GO" id="GO:0000287">
    <property type="term" value="F:magnesium ion binding"/>
    <property type="evidence" value="ECO:0007669"/>
    <property type="project" value="UniProtKB-UniRule"/>
</dbReference>
<dbReference type="GO" id="GO:0030145">
    <property type="term" value="F:manganese ion binding"/>
    <property type="evidence" value="ECO:0007669"/>
    <property type="project" value="UniProtKB-UniRule"/>
</dbReference>
<dbReference type="GO" id="GO:0030976">
    <property type="term" value="F:thiamine pyrophosphate binding"/>
    <property type="evidence" value="ECO:0007669"/>
    <property type="project" value="UniProtKB-UniRule"/>
</dbReference>
<dbReference type="GO" id="GO:0009234">
    <property type="term" value="P:menaquinone biosynthetic process"/>
    <property type="evidence" value="ECO:0007669"/>
    <property type="project" value="InterPro"/>
</dbReference>
<dbReference type="GO" id="GO:0042372">
    <property type="term" value="P:phylloquinone biosynthetic process"/>
    <property type="evidence" value="ECO:0007669"/>
    <property type="project" value="UniProtKB-UniRule"/>
</dbReference>
<dbReference type="CDD" id="cd07037">
    <property type="entry name" value="TPP_PYR_MenD"/>
    <property type="match status" value="1"/>
</dbReference>
<dbReference type="CDD" id="cd02009">
    <property type="entry name" value="TPP_SHCHC_synthase"/>
    <property type="match status" value="1"/>
</dbReference>
<dbReference type="Gene3D" id="3.40.50.970">
    <property type="match status" value="2"/>
</dbReference>
<dbReference type="Gene3D" id="3.40.50.1220">
    <property type="entry name" value="TPP-binding domain"/>
    <property type="match status" value="1"/>
</dbReference>
<dbReference type="HAMAP" id="MF_01659">
    <property type="entry name" value="MenD"/>
    <property type="match status" value="1"/>
</dbReference>
<dbReference type="InterPro" id="IPR004433">
    <property type="entry name" value="MenaQ_synth_MenD"/>
</dbReference>
<dbReference type="InterPro" id="IPR032264">
    <property type="entry name" value="MenD_middle"/>
</dbReference>
<dbReference type="InterPro" id="IPR029061">
    <property type="entry name" value="THDP-binding"/>
</dbReference>
<dbReference type="InterPro" id="IPR012001">
    <property type="entry name" value="Thiamin_PyroP_enz_TPP-bd_dom"/>
</dbReference>
<dbReference type="InterPro" id="IPR011766">
    <property type="entry name" value="TPP_enzyme_TPP-bd"/>
</dbReference>
<dbReference type="NCBIfam" id="TIGR00173">
    <property type="entry name" value="menD"/>
    <property type="match status" value="1"/>
</dbReference>
<dbReference type="PANTHER" id="PTHR42916">
    <property type="entry name" value="2-SUCCINYL-5-ENOLPYRUVYL-6-HYDROXY-3-CYCLOHEXENE-1-CARBOXYLATE SYNTHASE"/>
    <property type="match status" value="1"/>
</dbReference>
<dbReference type="PANTHER" id="PTHR42916:SF1">
    <property type="entry name" value="PROTEIN PHYLLO, CHLOROPLASTIC"/>
    <property type="match status" value="1"/>
</dbReference>
<dbReference type="Pfam" id="PF02775">
    <property type="entry name" value="TPP_enzyme_C"/>
    <property type="match status" value="1"/>
</dbReference>
<dbReference type="Pfam" id="PF16582">
    <property type="entry name" value="TPP_enzyme_M_2"/>
    <property type="match status" value="1"/>
</dbReference>
<dbReference type="Pfam" id="PF02776">
    <property type="entry name" value="TPP_enzyme_N"/>
    <property type="match status" value="1"/>
</dbReference>
<dbReference type="PIRSF" id="PIRSF004983">
    <property type="entry name" value="MenD"/>
    <property type="match status" value="1"/>
</dbReference>
<dbReference type="SUPFAM" id="SSF52518">
    <property type="entry name" value="Thiamin diphosphate-binding fold (THDP-binding)"/>
    <property type="match status" value="2"/>
</dbReference>
<protein>
    <recommendedName>
        <fullName evidence="1">2-succinyl-5-enolpyruvyl-6-hydroxy-3-cyclohexene-1-carboxylate synthase</fullName>
        <shortName evidence="1">SEPHCHC synthase</shortName>
        <ecNumber evidence="1">2.2.1.9</ecNumber>
    </recommendedName>
</protein>
<feature type="chain" id="PRO_0000341873" description="2-succinyl-5-enolpyruvyl-6-hydroxy-3-cyclohexene-1-carboxylate synthase">
    <location>
        <begin position="1"/>
        <end position="597"/>
    </location>
</feature>
<comment type="function">
    <text evidence="1">Catalyzes the thiamine diphosphate-dependent decarboxylation of 2-oxoglutarate and the subsequent addition of the resulting succinic semialdehyde-thiamine pyrophosphate anion to isochorismate to yield 2-succinyl-5-enolpyruvyl-6-hydroxy-3-cyclohexene-1-carboxylate (SEPHCHC).</text>
</comment>
<comment type="catalytic activity">
    <reaction evidence="1">
        <text>isochorismate + 2-oxoglutarate + H(+) = 5-enolpyruvoyl-6-hydroxy-2-succinyl-cyclohex-3-ene-1-carboxylate + CO2</text>
        <dbReference type="Rhea" id="RHEA:25593"/>
        <dbReference type="ChEBI" id="CHEBI:15378"/>
        <dbReference type="ChEBI" id="CHEBI:16526"/>
        <dbReference type="ChEBI" id="CHEBI:16810"/>
        <dbReference type="ChEBI" id="CHEBI:29780"/>
        <dbReference type="ChEBI" id="CHEBI:58818"/>
        <dbReference type="EC" id="2.2.1.9"/>
    </reaction>
</comment>
<comment type="cofactor">
    <cofactor evidence="1">
        <name>Mg(2+)</name>
        <dbReference type="ChEBI" id="CHEBI:18420"/>
    </cofactor>
    <cofactor evidence="1">
        <name>Mn(2+)</name>
        <dbReference type="ChEBI" id="CHEBI:29035"/>
    </cofactor>
</comment>
<comment type="cofactor">
    <cofactor evidence="1">
        <name>thiamine diphosphate</name>
        <dbReference type="ChEBI" id="CHEBI:58937"/>
    </cofactor>
    <text evidence="1">Binds 1 thiamine pyrophosphate per subunit.</text>
</comment>
<comment type="pathway">
    <text evidence="1">Quinol/quinone metabolism; 1,4-dihydroxy-2-naphthoate biosynthesis; 1,4-dihydroxy-2-naphthoate from chorismate: step 2/7.</text>
</comment>
<comment type="pathway">
    <text evidence="1">Cofactor biosynthesis; phylloquinone biosynthesis.</text>
</comment>
<comment type="subunit">
    <text evidence="1">Homodimer.</text>
</comment>
<comment type="similarity">
    <text evidence="1">Belongs to the TPP enzyme family. MenD subfamily.</text>
</comment>
<proteinExistence type="inferred from homology"/>
<accession>Q2JY06</accession>
<sequence length="597" mass="65936">MTGANSLQRLDWRNLNTLWGSILAETLSRLGCRVAVVCPGSRSAPLTYALAQHPEIEAIPAVDERSAAFFALGLAQQTRQPIPLVCTSGSAGAHFFPALIEAAESGWPLLVLTADRPPELRHCRAGQTIDQVKLYGHYPNWQAELALPSADLEALAYLRQMIIHAWERALYPFPGPVHLNVPLRDPLAPVADGSTAPLVHLQEDPEFEKTFFRGVISPSGLVTPAGGSAFASTASFWREWCGCERGVILAGPAQPADPQRYAEAVARLALALGWPVLAEGLSPLRNYASLNPYLITTYDFLLQGEQPPLWPEQVIQLGSLPTSKALRQTLAQARPRTWLLDPRAQNADPLHNPTTHLPFVVEEVAAGIPAGKAKATAFLQTWLRAEAKARAELDRLLADLPEWFEGKLAWWLAHHLPPETPLFIANSTPVRDVEWFWPPNDRRIRPYFNRGTNGIDGILSTAFGVAYRHRPTVLLTGDLAFLHDCGGLRLAQCLQGSLTILLINNQGGGIFELLPIAEAGPPFEPYFATPQAVDFALLCQAHGIPHRRIETWEELAQALDPLPAQGVRVLEILTDRRADARRRQEWFRRWSELPSTL</sequence>
<gene>
    <name evidence="1" type="primary">menD</name>
    <name type="ordered locus">CYA_0082</name>
</gene>
<evidence type="ECO:0000255" key="1">
    <source>
        <dbReference type="HAMAP-Rule" id="MF_01659"/>
    </source>
</evidence>
<keyword id="KW-0460">Magnesium</keyword>
<keyword id="KW-0464">Manganese</keyword>
<keyword id="KW-0479">Metal-binding</keyword>
<keyword id="KW-0786">Thiamine pyrophosphate</keyword>
<keyword id="KW-0808">Transferase</keyword>
<reference key="1">
    <citation type="journal article" date="2007" name="ISME J.">
        <title>Population level functional diversity in a microbial community revealed by comparative genomic and metagenomic analyses.</title>
        <authorList>
            <person name="Bhaya D."/>
            <person name="Grossman A.R."/>
            <person name="Steunou A.-S."/>
            <person name="Khuri N."/>
            <person name="Cohan F.M."/>
            <person name="Hamamura N."/>
            <person name="Melendrez M.C."/>
            <person name="Bateson M.M."/>
            <person name="Ward D.M."/>
            <person name="Heidelberg J.F."/>
        </authorList>
    </citation>
    <scope>NUCLEOTIDE SEQUENCE [LARGE SCALE GENOMIC DNA]</scope>
    <source>
        <strain>JA-3-3Ab</strain>
    </source>
</reference>